<sequence length="214" mass="24826">MGLSHSHSVETRELVEKTGFSAEQIEHLHKRFKSLSGDEPTIRRGHLNDISDLVLNPIRSKIIDAFFDKRNLRKGPSGYVEEINFEEFLIIMSYFRPLSQHMDEENISVCRTDKLRFLFNMYDSDNDNKITLEEYRKVVEELLSGNPNIEKEMARSIADGAMLEAASICVGQMEPDQVYEGITFDDFLKIWEGIDIETKMHIRFLNMESIPSCR</sequence>
<evidence type="ECO:0000250" key="1"/>
<evidence type="ECO:0000250" key="2">
    <source>
        <dbReference type="UniProtKB" id="Q96BS2"/>
    </source>
</evidence>
<evidence type="ECO:0000250" key="3">
    <source>
        <dbReference type="UniProtKB" id="Q9JKL5"/>
    </source>
</evidence>
<evidence type="ECO:0000255" key="4"/>
<evidence type="ECO:0000255" key="5">
    <source>
        <dbReference type="PROSITE-ProRule" id="PRU00448"/>
    </source>
</evidence>
<evidence type="ECO:0000303" key="6">
    <source>
    </source>
</evidence>
<evidence type="ECO:0000305" key="7"/>
<evidence type="ECO:0000312" key="8">
    <source>
        <dbReference type="EMBL" id="AAH84830.1"/>
    </source>
</evidence>
<protein>
    <recommendedName>
        <fullName>Calcineurin B homologous protein 3</fullName>
    </recommendedName>
    <alternativeName>
        <fullName evidence="6">Tescalcin</fullName>
        <shortName evidence="2">TSC</shortName>
    </alternativeName>
</protein>
<feature type="initiator methionine" description="Removed" evidence="4">
    <location>
        <position position="1"/>
    </location>
</feature>
<feature type="chain" id="PRO_0000390719" description="Calcineurin B homologous protein 3">
    <location>
        <begin position="2"/>
        <end position="214"/>
    </location>
</feature>
<feature type="domain" description="EF-hand" evidence="5">
    <location>
        <begin position="110"/>
        <end position="145"/>
    </location>
</feature>
<feature type="binding site" evidence="5">
    <location>
        <position position="123"/>
    </location>
    <ligand>
        <name>Ca(2+)</name>
        <dbReference type="ChEBI" id="CHEBI:29108"/>
    </ligand>
</feature>
<feature type="binding site" evidence="5">
    <location>
        <position position="125"/>
    </location>
    <ligand>
        <name>Ca(2+)</name>
        <dbReference type="ChEBI" id="CHEBI:29108"/>
    </ligand>
</feature>
<feature type="binding site" evidence="5">
    <location>
        <position position="127"/>
    </location>
    <ligand>
        <name>Ca(2+)</name>
        <dbReference type="ChEBI" id="CHEBI:29108"/>
    </ligand>
</feature>
<feature type="binding site" evidence="5">
    <location>
        <position position="129"/>
    </location>
    <ligand>
        <name>Ca(2+)</name>
        <dbReference type="ChEBI" id="CHEBI:29108"/>
    </ligand>
</feature>
<feature type="binding site" evidence="5">
    <location>
        <position position="134"/>
    </location>
    <ligand>
        <name>Ca(2+)</name>
        <dbReference type="ChEBI" id="CHEBI:29108"/>
    </ligand>
</feature>
<feature type="lipid moiety-binding region" description="N-myristoyl glycine" evidence="4">
    <location>
        <position position="2"/>
    </location>
</feature>
<gene>
    <name evidence="6" type="primary">tesc</name>
    <name type="synonym">chp3</name>
</gene>
<organism>
    <name type="scientific">Xenopus laevis</name>
    <name type="common">African clawed frog</name>
    <dbReference type="NCBI Taxonomy" id="8355"/>
    <lineage>
        <taxon>Eukaryota</taxon>
        <taxon>Metazoa</taxon>
        <taxon>Chordata</taxon>
        <taxon>Craniata</taxon>
        <taxon>Vertebrata</taxon>
        <taxon>Euteleostomi</taxon>
        <taxon>Amphibia</taxon>
        <taxon>Batrachia</taxon>
        <taxon>Anura</taxon>
        <taxon>Pipoidea</taxon>
        <taxon>Pipidae</taxon>
        <taxon>Xenopodinae</taxon>
        <taxon>Xenopus</taxon>
        <taxon>Xenopus</taxon>
    </lineage>
</organism>
<comment type="function">
    <text evidence="1">Functions as an integral cofactor in cell pH regulation by controlling plasma membrane-type Na(+)/H(+) exchange activity. Promotes the induction of hematopoietic stem cell differentiation toward megakaryocytic lineage. Essential for the coupling of ERK cascade activation with the expression of ETS family genes in megakaryocytic differentiation. Also involved in granulocytic differentiation in a ERK-dependent manner. Inhibits the phosphatase activity of calcineurin (By similarity).</text>
</comment>
<comment type="subunit">
    <text evidence="3">Monomer (By similarity). Homodimer (By similarity).</text>
</comment>
<comment type="subcellular location">
    <subcellularLocation>
        <location evidence="2 3">Nucleus</location>
    </subcellularLocation>
    <subcellularLocation>
        <location evidence="2 3">Cytoplasm</location>
    </subcellularLocation>
    <subcellularLocation>
        <location evidence="2">Membrane</location>
        <topology evidence="2">Lipid-anchor</topology>
    </subcellularLocation>
    <subcellularLocation>
        <location evidence="2">Cell membrane</location>
    </subcellularLocation>
    <subcellularLocation>
        <location evidence="2">Cell projection</location>
        <location evidence="2">Lamellipodium</location>
    </subcellularLocation>
    <subcellularLocation>
        <location evidence="3">Cell projection</location>
        <location evidence="3">Ruffle membrane</location>
    </subcellularLocation>
</comment>
<comment type="domain">
    <text evidence="1">Binds calcium via its EF-hands. Calcium-binding mediates a conformational change. Can also bind magnesium (By similarity).</text>
</comment>
<comment type="similarity">
    <text evidence="7">Belongs to the calcineurin regulatory subunit family. CHP subfamily.</text>
</comment>
<reference evidence="8" key="1">
    <citation type="submission" date="2004-10" db="EMBL/GenBank/DDBJ databases">
        <authorList>
            <consortium name="NIH - Xenopus Gene Collection (XGC) project"/>
        </authorList>
    </citation>
    <scope>NUCLEOTIDE SEQUENCE [LARGE SCALE MRNA]</scope>
    <source>
        <tissue evidence="8">Tadpole</tissue>
    </source>
</reference>
<reference evidence="7" key="2">
    <citation type="journal article" date="2009" name="Gene Expr. Patterns">
        <title>Expression and evolutionary conservation of the tescalcin gene during development.</title>
        <authorList>
            <person name="Bao Y."/>
            <person name="Hudson Q.J."/>
            <person name="Perera E.M."/>
            <person name="Akan L."/>
            <person name="Tobet S.A."/>
            <person name="Smith C.A."/>
            <person name="Sinclair A.H."/>
            <person name="Berkovitz G.D."/>
        </authorList>
    </citation>
    <scope>IDENTIFICATION</scope>
</reference>
<dbReference type="EMBL" id="BC084830">
    <property type="protein sequence ID" value="AAH84830.1"/>
    <property type="molecule type" value="mRNA"/>
</dbReference>
<dbReference type="RefSeq" id="NP_001088498.1">
    <property type="nucleotide sequence ID" value="NM_001095029.2"/>
</dbReference>
<dbReference type="SMR" id="Q5U554"/>
<dbReference type="DNASU" id="495366"/>
<dbReference type="GeneID" id="495366"/>
<dbReference type="KEGG" id="xla:495366"/>
<dbReference type="AGR" id="Xenbase:XB-GENE-991117"/>
<dbReference type="CTD" id="495366"/>
<dbReference type="Xenbase" id="XB-GENE-991117">
    <property type="gene designation" value="tesc.L"/>
</dbReference>
<dbReference type="OMA" id="MRCGKST"/>
<dbReference type="OrthoDB" id="191686at2759"/>
<dbReference type="Proteomes" id="UP000186698">
    <property type="component" value="Chromosome 1L"/>
</dbReference>
<dbReference type="Bgee" id="495366">
    <property type="expression patterns" value="Expressed in stomach and 19 other cell types or tissues"/>
</dbReference>
<dbReference type="GO" id="GO:0005737">
    <property type="term" value="C:cytoplasm"/>
    <property type="evidence" value="ECO:0000250"/>
    <property type="project" value="UniProtKB"/>
</dbReference>
<dbReference type="GO" id="GO:0030027">
    <property type="term" value="C:lamellipodium"/>
    <property type="evidence" value="ECO:0000250"/>
    <property type="project" value="UniProtKB"/>
</dbReference>
<dbReference type="GO" id="GO:0005634">
    <property type="term" value="C:nucleus"/>
    <property type="evidence" value="ECO:0000250"/>
    <property type="project" value="UniProtKB"/>
</dbReference>
<dbReference type="GO" id="GO:0005886">
    <property type="term" value="C:plasma membrane"/>
    <property type="evidence" value="ECO:0000250"/>
    <property type="project" value="UniProtKB"/>
</dbReference>
<dbReference type="GO" id="GO:0001726">
    <property type="term" value="C:ruffle"/>
    <property type="evidence" value="ECO:0000250"/>
    <property type="project" value="UniProtKB"/>
</dbReference>
<dbReference type="GO" id="GO:0032587">
    <property type="term" value="C:ruffle membrane"/>
    <property type="evidence" value="ECO:0007669"/>
    <property type="project" value="UniProtKB-SubCell"/>
</dbReference>
<dbReference type="GO" id="GO:0005509">
    <property type="term" value="F:calcium ion binding"/>
    <property type="evidence" value="ECO:0000250"/>
    <property type="project" value="UniProtKB"/>
</dbReference>
<dbReference type="GO" id="GO:0000287">
    <property type="term" value="F:magnesium ion binding"/>
    <property type="evidence" value="ECO:0000250"/>
    <property type="project" value="UniProtKB"/>
</dbReference>
<dbReference type="GO" id="GO:0019212">
    <property type="term" value="F:phosphatase inhibitor activity"/>
    <property type="evidence" value="ECO:0000250"/>
    <property type="project" value="UniProtKB"/>
</dbReference>
<dbReference type="GO" id="GO:0042803">
    <property type="term" value="F:protein homodimerization activity"/>
    <property type="evidence" value="ECO:0000250"/>
    <property type="project" value="UniProtKB"/>
</dbReference>
<dbReference type="GO" id="GO:0004860">
    <property type="term" value="F:protein kinase inhibitor activity"/>
    <property type="evidence" value="ECO:0007669"/>
    <property type="project" value="UniProtKB-KW"/>
</dbReference>
<dbReference type="GO" id="GO:0030154">
    <property type="term" value="P:cell differentiation"/>
    <property type="evidence" value="ECO:0007669"/>
    <property type="project" value="UniProtKB-KW"/>
</dbReference>
<dbReference type="GO" id="GO:0071300">
    <property type="term" value="P:cellular response to retinoic acid"/>
    <property type="evidence" value="ECO:0000250"/>
    <property type="project" value="UniProtKB"/>
</dbReference>
<dbReference type="GO" id="GO:0030854">
    <property type="term" value="P:positive regulation of granulocyte differentiation"/>
    <property type="evidence" value="ECO:0000250"/>
    <property type="project" value="UniProtKB"/>
</dbReference>
<dbReference type="GO" id="GO:0032417">
    <property type="term" value="P:positive regulation of sodium:proton antiporter activity"/>
    <property type="evidence" value="ECO:0000250"/>
    <property type="project" value="UniProtKB"/>
</dbReference>
<dbReference type="GO" id="GO:0072659">
    <property type="term" value="P:protein localization to plasma membrane"/>
    <property type="evidence" value="ECO:0000250"/>
    <property type="project" value="UniProtKB"/>
</dbReference>
<dbReference type="GO" id="GO:0051604">
    <property type="term" value="P:protein maturation"/>
    <property type="evidence" value="ECO:0000250"/>
    <property type="project" value="UniProtKB"/>
</dbReference>
<dbReference type="GO" id="GO:0050821">
    <property type="term" value="P:protein stabilization"/>
    <property type="evidence" value="ECO:0000250"/>
    <property type="project" value="UniProtKB"/>
</dbReference>
<dbReference type="GO" id="GO:0033628">
    <property type="term" value="P:regulation of cell adhesion mediated by integrin"/>
    <property type="evidence" value="ECO:0000318"/>
    <property type="project" value="GO_Central"/>
</dbReference>
<dbReference type="FunFam" id="1.10.238.10:FF:000205">
    <property type="entry name" value="calcineurin B homologous protein 3"/>
    <property type="match status" value="1"/>
</dbReference>
<dbReference type="Gene3D" id="1.10.238.10">
    <property type="entry name" value="EF-hand"/>
    <property type="match status" value="1"/>
</dbReference>
<dbReference type="InterPro" id="IPR052490">
    <property type="entry name" value="CHP3"/>
</dbReference>
<dbReference type="InterPro" id="IPR011992">
    <property type="entry name" value="EF-hand-dom_pair"/>
</dbReference>
<dbReference type="InterPro" id="IPR018247">
    <property type="entry name" value="EF_Hand_1_Ca_BS"/>
</dbReference>
<dbReference type="InterPro" id="IPR002048">
    <property type="entry name" value="EF_hand_dom"/>
</dbReference>
<dbReference type="PANTHER" id="PTHR46823">
    <property type="entry name" value="CALCINEURIN B HOMOLOGOUS PROTEIN 3"/>
    <property type="match status" value="1"/>
</dbReference>
<dbReference type="Pfam" id="PF13405">
    <property type="entry name" value="EF-hand_6"/>
    <property type="match status" value="1"/>
</dbReference>
<dbReference type="SMART" id="SM00054">
    <property type="entry name" value="EFh"/>
    <property type="match status" value="1"/>
</dbReference>
<dbReference type="SUPFAM" id="SSF47473">
    <property type="entry name" value="EF-hand"/>
    <property type="match status" value="1"/>
</dbReference>
<dbReference type="PROSITE" id="PS00018">
    <property type="entry name" value="EF_HAND_1"/>
    <property type="match status" value="1"/>
</dbReference>
<dbReference type="PROSITE" id="PS50222">
    <property type="entry name" value="EF_HAND_2"/>
    <property type="match status" value="1"/>
</dbReference>
<proteinExistence type="evidence at transcript level"/>
<name>CHP3_XENLA</name>
<accession>Q5U554</accession>
<keyword id="KW-0106">Calcium</keyword>
<keyword id="KW-1003">Cell membrane</keyword>
<keyword id="KW-0966">Cell projection</keyword>
<keyword id="KW-0963">Cytoplasm</keyword>
<keyword id="KW-0221">Differentiation</keyword>
<keyword id="KW-0449">Lipoprotein</keyword>
<keyword id="KW-0472">Membrane</keyword>
<keyword id="KW-0479">Metal-binding</keyword>
<keyword id="KW-0519">Myristate</keyword>
<keyword id="KW-0539">Nucleus</keyword>
<keyword id="KW-0649">Protein kinase inhibitor</keyword>
<keyword id="KW-1185">Reference proteome</keyword>